<gene>
    <name evidence="4" type="primary">ppzF</name>
    <name type="ORF">NOR_07093</name>
</gene>
<feature type="chain" id="PRO_0000450265" description="Sulfotransferase ppzF">
    <location>
        <begin position="1"/>
        <end position="340"/>
    </location>
</feature>
<proteinExistence type="inferred from homology"/>
<organism>
    <name type="scientific">Metarhizium rileyi (strain RCEF 4871)</name>
    <name type="common">Nomuraea rileyi</name>
    <dbReference type="NCBI Taxonomy" id="1649241"/>
    <lineage>
        <taxon>Eukaryota</taxon>
        <taxon>Fungi</taxon>
        <taxon>Dikarya</taxon>
        <taxon>Ascomycota</taxon>
        <taxon>Pezizomycotina</taxon>
        <taxon>Sordariomycetes</taxon>
        <taxon>Hypocreomycetidae</taxon>
        <taxon>Hypocreales</taxon>
        <taxon>Clavicipitaceae</taxon>
        <taxon>Metarhizium</taxon>
    </lineage>
</organism>
<keyword id="KW-1185">Reference proteome</keyword>
<keyword id="KW-0808">Transferase</keyword>
<reference key="1">
    <citation type="journal article" date="2016" name="Genome Biol. Evol.">
        <title>Divergent and convergent evolution of fungal pathogenicity.</title>
        <authorList>
            <person name="Shang Y."/>
            <person name="Xiao G."/>
            <person name="Zheng P."/>
            <person name="Cen K."/>
            <person name="Zhan S."/>
            <person name="Wang C."/>
        </authorList>
    </citation>
    <scope>NUCLEOTIDE SEQUENCE [LARGE SCALE GENOMIC DNA]</scope>
    <source>
        <strain>RCEF 4871</strain>
    </source>
</reference>
<reference key="2">
    <citation type="journal article" date="2019" name="Environ. Microbiol.">
        <title>Orthologous peramine and pyrrolopyrazine-producing biosynthetic gene clusters in Metarhizium rileyi, Metarhizium majus and Cladonia grayi.</title>
        <authorList>
            <person name="Berry D."/>
            <person name="Mace W."/>
            <person name="Rehner S.A."/>
            <person name="Grage K."/>
            <person name="Dijkwel P.P."/>
            <person name="Young C.A."/>
            <person name="Scott B."/>
        </authorList>
    </citation>
    <scope>FUNCTION</scope>
    <scope>PATHWAY</scope>
</reference>
<sequence length="340" mass="38520">MSAHPGKPGRYYLISYPRTASNLLLKILALDSQPNFSSGEVDGGYFFMPADDILIEPRIRARSIGDWTADERAQVKESFQACFEAQQQWLEATESQGRSVFVKEHTVFFADPTARSDLQFGPSPTREPAWTVEYAGGSTHSKLNITVLPDEFLLTWLPTFLIRHPALAFPSLYRTVIKREGKESAAADNFASLLTTVEWSRSLYDFYVQNRESLPCSPDQSLEWPMILDADDIIAHPATVALYCNKIGMDPRKLCFHWDQFKSEELSQIEPNQLAMRMSLYQSTGIDTSKSSRGINVDDEASKWRSEFGIAVGDHIEKLVRGAMADYEYLRARRLRADRG</sequence>
<evidence type="ECO:0000250" key="1">
    <source>
        <dbReference type="UniProtKB" id="A0A455ZLR3"/>
    </source>
</evidence>
<evidence type="ECO:0000250" key="2">
    <source>
        <dbReference type="UniProtKB" id="Q4H424"/>
    </source>
</evidence>
<evidence type="ECO:0000269" key="3">
    <source>
    </source>
</evidence>
<evidence type="ECO:0000303" key="4">
    <source>
    </source>
</evidence>
<evidence type="ECO:0000305" key="5">
    <source>
    </source>
</evidence>
<protein>
    <recommendedName>
        <fullName evidence="4">Sulfotransferase ppzF</fullName>
        <ecNumber evidence="5">2.8.2.-</ecNumber>
    </recommendedName>
    <alternativeName>
        <fullName evidence="4">Pyrrolopyrazine biosynthesis cluster protein F</fullName>
    </alternativeName>
</protein>
<accession>A0A166YZT6</accession>
<name>PPZF_METRR</name>
<dbReference type="EC" id="2.8.2.-" evidence="5"/>
<dbReference type="EMBL" id="AZHC01000030">
    <property type="protein sequence ID" value="OAA37394.1"/>
    <property type="molecule type" value="Genomic_DNA"/>
</dbReference>
<dbReference type="STRING" id="1081105.A0A166YZT6"/>
<dbReference type="OMA" id="YLITYPR"/>
<dbReference type="OrthoDB" id="3650366at2759"/>
<dbReference type="Proteomes" id="UP000243498">
    <property type="component" value="Unassembled WGS sequence"/>
</dbReference>
<dbReference type="GO" id="GO:0016740">
    <property type="term" value="F:transferase activity"/>
    <property type="evidence" value="ECO:0007669"/>
    <property type="project" value="UniProtKB-KW"/>
</dbReference>
<dbReference type="InterPro" id="IPR027417">
    <property type="entry name" value="P-loop_NTPase"/>
</dbReference>
<dbReference type="InterPro" id="IPR053226">
    <property type="entry name" value="Pyrrolopyrazine_biosynth_F"/>
</dbReference>
<dbReference type="PANTHER" id="PTHR48419">
    <property type="entry name" value="SULFOTRANSFERASE DOMAIN-CONTAINING PROTEIN"/>
    <property type="match status" value="1"/>
</dbReference>
<dbReference type="PANTHER" id="PTHR48419:SF1">
    <property type="entry name" value="SULFOTRANSFERASE DOMAIN-CONTAINING PROTEIN"/>
    <property type="match status" value="1"/>
</dbReference>
<dbReference type="SUPFAM" id="SSF52540">
    <property type="entry name" value="P-loop containing nucleoside triphosphate hydrolases"/>
    <property type="match status" value="1"/>
</dbReference>
<comment type="function">
    <text evidence="1 2 3">Sulfotransferase; part of the gene cluster that mediates the biosynthesis of pyrrolopyrazines, secondary metabolites showing insecticidal activity (PubMed:30452111). The role of ppzF within the pathway has still to be determined (By similarity). The single multifunctional NRPS ppzA is sufficient to produce peramine via condensation of 1-pyrroline-5-carboxylate and arginine, N-methylation of the alpha-amino group of arginine and reduction of the thioester and the cyclization to form an iminium ion resulting in release from the peptide synthetase. Deprotonation of this intermediate and oxidation of the pyrroline ring would give rise to peramine (By similarity). In Epichloe species that produce only peramine, the peramine synthetase gene is not localized in a gene cluster, in contrast to Metarhizium species that contain additional pyrrolopyrazine biosynthesis genes. The 2-oxoglutarate-Fe(II) type oxidoreductase ppzC hydroxylates peramine to yield the newly identified compound 8-hydroxyperamine whereas ppzD converts L-proline into trans-4-hydroxy-L-proline, a precursor of peramine biosynthesis (By similarity).</text>
</comment>
<comment type="pathway">
    <text evidence="5">Secondary metabolite biosynthesis.</text>
</comment>